<name>G3PP_PYRAB</name>
<sequence>MIKVIFFDLDDTLVDTTKLAELARRNAIENMIRHGLPVDFETAYSELMELIKEYGSNFPHHFDYLLRRLDLPYNPKWVSAGVIAYHNTKFAYLREVPGARKVLIRLRELGYRLGIITDGNPVKQWEKILRLEIDDFFEHVIISDFEGVKKPHPKIFKKALKAFNVDAQEALMVGDRLYSDIYGAKNVGMKTVWFKYGKYSKEELEYREYADYEIEKLQDLLKVIENENGSNKEVHPAR</sequence>
<accession>Q9V1B3</accession>
<accession>G8ZGM4</accession>
<reference key="1">
    <citation type="journal article" date="2003" name="Mol. Microbiol.">
        <title>An integrated analysis of the genome of the hyperthermophilic archaeon Pyrococcus abyssi.</title>
        <authorList>
            <person name="Cohen G.N."/>
            <person name="Barbe V."/>
            <person name="Flament D."/>
            <person name="Galperin M."/>
            <person name="Heilig R."/>
            <person name="Lecompte O."/>
            <person name="Poch O."/>
            <person name="Prieur D."/>
            <person name="Querellou J."/>
            <person name="Ripp R."/>
            <person name="Thierry J.-C."/>
            <person name="Van der Oost J."/>
            <person name="Weissenbach J."/>
            <person name="Zivanovic Y."/>
            <person name="Forterre P."/>
        </authorList>
    </citation>
    <scope>NUCLEOTIDE SEQUENCE [LARGE SCALE GENOMIC DNA]</scope>
    <source>
        <strain>GE5 / Orsay</strain>
    </source>
</reference>
<reference key="2">
    <citation type="journal article" date="2012" name="Curr. Microbiol.">
        <title>Re-annotation of two hyperthermophilic archaea Pyrococcus abyssi GE5 and Pyrococcus furiosus DSM 3638.</title>
        <authorList>
            <person name="Gao J."/>
            <person name="Wang J."/>
        </authorList>
    </citation>
    <scope>GENOME REANNOTATION</scope>
    <source>
        <strain>GE5 / Orsay</strain>
    </source>
</reference>
<gene>
    <name type="ordered locus">PYRAB05140</name>
    <name type="ORF">PAB2019</name>
</gene>
<dbReference type="EC" id="3.1.3.-" evidence="1"/>
<dbReference type="EMBL" id="AJ248284">
    <property type="protein sequence ID" value="CAB49436.1"/>
    <property type="molecule type" value="Genomic_DNA"/>
</dbReference>
<dbReference type="EMBL" id="HE613800">
    <property type="protein sequence ID" value="CCE69903.1"/>
    <property type="molecule type" value="Genomic_DNA"/>
</dbReference>
<dbReference type="PIR" id="E75169">
    <property type="entry name" value="E75169"/>
</dbReference>
<dbReference type="RefSeq" id="WP_010867638.1">
    <property type="nucleotide sequence ID" value="NC_000868.1"/>
</dbReference>
<dbReference type="SMR" id="Q9V1B3"/>
<dbReference type="STRING" id="272844.PAB2019"/>
<dbReference type="KEGG" id="pab:PAB2019"/>
<dbReference type="PATRIC" id="fig|272844.11.peg.549"/>
<dbReference type="eggNOG" id="arCOG02291">
    <property type="taxonomic scope" value="Archaea"/>
</dbReference>
<dbReference type="HOGENOM" id="CLU_045011_8_3_2"/>
<dbReference type="OrthoDB" id="27736at2157"/>
<dbReference type="PhylomeDB" id="Q9V1B3"/>
<dbReference type="Proteomes" id="UP000000810">
    <property type="component" value="Chromosome"/>
</dbReference>
<dbReference type="Proteomes" id="UP000009139">
    <property type="component" value="Chromosome"/>
</dbReference>
<dbReference type="GO" id="GO:0046872">
    <property type="term" value="F:metal ion binding"/>
    <property type="evidence" value="ECO:0007669"/>
    <property type="project" value="UniProtKB-KW"/>
</dbReference>
<dbReference type="GO" id="GO:0016791">
    <property type="term" value="F:phosphatase activity"/>
    <property type="evidence" value="ECO:0007669"/>
    <property type="project" value="TreeGrafter"/>
</dbReference>
<dbReference type="GO" id="GO:0044283">
    <property type="term" value="P:small molecule biosynthetic process"/>
    <property type="evidence" value="ECO:0007669"/>
    <property type="project" value="UniProtKB-ARBA"/>
</dbReference>
<dbReference type="CDD" id="cd04305">
    <property type="entry name" value="HAD_Neu5Ac-Pase_like"/>
    <property type="match status" value="1"/>
</dbReference>
<dbReference type="Gene3D" id="1.10.150.520">
    <property type="match status" value="1"/>
</dbReference>
<dbReference type="Gene3D" id="3.40.50.1000">
    <property type="entry name" value="HAD superfamily/HAD-like"/>
    <property type="match status" value="1"/>
</dbReference>
<dbReference type="InterPro" id="IPR051400">
    <property type="entry name" value="HAD-like_hydrolase"/>
</dbReference>
<dbReference type="InterPro" id="IPR036412">
    <property type="entry name" value="HAD-like_sf"/>
</dbReference>
<dbReference type="InterPro" id="IPR006439">
    <property type="entry name" value="HAD-SF_hydro_IA"/>
</dbReference>
<dbReference type="InterPro" id="IPR011950">
    <property type="entry name" value="HAD-SF_hydro_IA_CTE7"/>
</dbReference>
<dbReference type="InterPro" id="IPR006549">
    <property type="entry name" value="HAD-SF_hydro_IIIA"/>
</dbReference>
<dbReference type="InterPro" id="IPR023214">
    <property type="entry name" value="HAD_sf"/>
</dbReference>
<dbReference type="NCBIfam" id="TIGR02253">
    <property type="entry name" value="CTE7"/>
    <property type="match status" value="1"/>
</dbReference>
<dbReference type="NCBIfam" id="TIGR01549">
    <property type="entry name" value="HAD-SF-IA-v1"/>
    <property type="match status" value="1"/>
</dbReference>
<dbReference type="NCBIfam" id="TIGR01509">
    <property type="entry name" value="HAD-SF-IA-v3"/>
    <property type="match status" value="1"/>
</dbReference>
<dbReference type="NCBIfam" id="TIGR01662">
    <property type="entry name" value="HAD-SF-IIIA"/>
    <property type="match status" value="1"/>
</dbReference>
<dbReference type="PANTHER" id="PTHR46470:SF2">
    <property type="entry name" value="GLYCERALDEHYDE 3-PHOSPHATE PHOSPHATASE"/>
    <property type="match status" value="1"/>
</dbReference>
<dbReference type="PANTHER" id="PTHR46470">
    <property type="entry name" value="N-ACYLNEURAMINATE-9-PHOSPHATASE"/>
    <property type="match status" value="1"/>
</dbReference>
<dbReference type="Pfam" id="PF00702">
    <property type="entry name" value="Hydrolase"/>
    <property type="match status" value="1"/>
</dbReference>
<dbReference type="PRINTS" id="PR00413">
    <property type="entry name" value="HADHALOGNASE"/>
</dbReference>
<dbReference type="SFLD" id="SFLDG01135">
    <property type="entry name" value="C1.5.6:_HAD__Beta-PGM__Phospha"/>
    <property type="match status" value="1"/>
</dbReference>
<dbReference type="SFLD" id="SFLDG01129">
    <property type="entry name" value="C1.5:_HAD__Beta-PGM__Phosphata"/>
    <property type="match status" value="1"/>
</dbReference>
<dbReference type="SUPFAM" id="SSF56784">
    <property type="entry name" value="HAD-like"/>
    <property type="match status" value="1"/>
</dbReference>
<evidence type="ECO:0000250" key="1">
    <source>
        <dbReference type="UniProtKB" id="Q58832"/>
    </source>
</evidence>
<evidence type="ECO:0000305" key="2"/>
<comment type="function">
    <text evidence="1">Catalyzes the dephosphorylation of D,L-glyceraldehyde 3-phosphate in vitro.</text>
</comment>
<comment type="cofactor">
    <cofactor evidence="1">
        <name>Mg(2+)</name>
        <dbReference type="ChEBI" id="CHEBI:18420"/>
    </cofactor>
</comment>
<comment type="similarity">
    <text evidence="2">Belongs to the HAD-like hydrolase superfamily.</text>
</comment>
<protein>
    <recommendedName>
        <fullName evidence="1">Glyceraldehyde 3-phosphate phosphatase</fullName>
        <ecNumber evidence="1">3.1.3.-</ecNumber>
    </recommendedName>
</protein>
<proteinExistence type="inferred from homology"/>
<keyword id="KW-0378">Hydrolase</keyword>
<keyword id="KW-0460">Magnesium</keyword>
<keyword id="KW-0479">Metal-binding</keyword>
<feature type="chain" id="PRO_0000107332" description="Glyceraldehyde 3-phosphate phosphatase">
    <location>
        <begin position="1"/>
        <end position="238"/>
    </location>
</feature>
<organism>
    <name type="scientific">Pyrococcus abyssi (strain GE5 / Orsay)</name>
    <dbReference type="NCBI Taxonomy" id="272844"/>
    <lineage>
        <taxon>Archaea</taxon>
        <taxon>Methanobacteriati</taxon>
        <taxon>Methanobacteriota</taxon>
        <taxon>Thermococci</taxon>
        <taxon>Thermococcales</taxon>
        <taxon>Thermococcaceae</taxon>
        <taxon>Pyrococcus</taxon>
    </lineage>
</organism>